<keyword id="KW-0067">ATP-binding</keyword>
<keyword id="KW-0347">Helicase</keyword>
<keyword id="KW-0378">Hydrolase</keyword>
<keyword id="KW-0547">Nucleotide-binding</keyword>
<keyword id="KW-1185">Reference proteome</keyword>
<keyword id="KW-0946">Virion</keyword>
<organism>
    <name type="scientific">Acanthamoeba polyphaga mimivirus</name>
    <name type="common">APMV</name>
    <dbReference type="NCBI Taxonomy" id="212035"/>
    <lineage>
        <taxon>Viruses</taxon>
        <taxon>Varidnaviria</taxon>
        <taxon>Bamfordvirae</taxon>
        <taxon>Nucleocytoviricota</taxon>
        <taxon>Megaviricetes</taxon>
        <taxon>Imitervirales</taxon>
        <taxon>Mimiviridae</taxon>
        <taxon>Megamimivirinae</taxon>
        <taxon>Mimivirus</taxon>
        <taxon>Mimivirus bradfordmassiliense</taxon>
    </lineage>
</organism>
<evidence type="ECO:0000255" key="1">
    <source>
        <dbReference type="PROSITE-ProRule" id="PRU00541"/>
    </source>
</evidence>
<evidence type="ECO:0000255" key="2">
    <source>
        <dbReference type="PROSITE-ProRule" id="PRU00542"/>
    </source>
</evidence>
<evidence type="ECO:0000269" key="3">
    <source>
    </source>
</evidence>
<evidence type="ECO:0000305" key="4"/>
<comment type="catalytic activity">
    <reaction>
        <text>ATP + H2O = ADP + phosphate + H(+)</text>
        <dbReference type="Rhea" id="RHEA:13065"/>
        <dbReference type="ChEBI" id="CHEBI:15377"/>
        <dbReference type="ChEBI" id="CHEBI:15378"/>
        <dbReference type="ChEBI" id="CHEBI:30616"/>
        <dbReference type="ChEBI" id="CHEBI:43474"/>
        <dbReference type="ChEBI" id="CHEBI:456216"/>
        <dbReference type="EC" id="3.6.4.13"/>
    </reaction>
</comment>
<comment type="subcellular location">
    <subcellularLocation>
        <location evidence="3">Virion</location>
    </subcellularLocation>
</comment>
<comment type="similarity">
    <text evidence="4">Belongs to the DEAD box helicase family. DEAH subfamily.</text>
</comment>
<reference key="1">
    <citation type="journal article" date="2004" name="Science">
        <title>The 1.2-megabase genome sequence of Mimivirus.</title>
        <authorList>
            <person name="Raoult D."/>
            <person name="Audic S."/>
            <person name="Robert C."/>
            <person name="Abergel C."/>
            <person name="Renesto P."/>
            <person name="Ogata H."/>
            <person name="La Scola B."/>
            <person name="Susan M."/>
            <person name="Claverie J.-M."/>
        </authorList>
    </citation>
    <scope>NUCLEOTIDE SEQUENCE [LARGE SCALE GENOMIC DNA]</scope>
    <source>
        <strain>Rowbotham-Bradford</strain>
    </source>
</reference>
<reference key="2">
    <citation type="journal article" date="2006" name="J. Virol.">
        <title>Mimivirus giant particles incorporate a large fraction of anonymous and unique gene products.</title>
        <authorList>
            <person name="Renesto P."/>
            <person name="Abergel C."/>
            <person name="Decloquement P."/>
            <person name="Moinier D."/>
            <person name="Azza S."/>
            <person name="Ogata H."/>
            <person name="Fourquet P."/>
            <person name="Gorvel J.-P."/>
            <person name="Claverie J.-M."/>
            <person name="Raoult D."/>
        </authorList>
    </citation>
    <scope>IDENTIFICATION BY MASS SPECTROMETRY [LARGE SCALE ANALYSIS]</scope>
    <scope>SUBCELLULAR LOCATION</scope>
</reference>
<accession>Q7T6X3</accession>
<gene>
    <name type="ordered locus">MIMI_R563</name>
</gene>
<protein>
    <recommendedName>
        <fullName>Putative ATP-dependent RNA helicase R563</fullName>
        <ecNumber>3.6.4.13</ecNumber>
    </recommendedName>
</protein>
<name>YR563_MIMIV</name>
<organismHost>
    <name type="scientific">Acanthamoeba polyphaga</name>
    <name type="common">Amoeba</name>
    <dbReference type="NCBI Taxonomy" id="5757"/>
</organismHost>
<feature type="chain" id="PRO_0000244775" description="Putative ATP-dependent RNA helicase R563">
    <location>
        <begin position="1"/>
        <end position="573"/>
    </location>
</feature>
<feature type="domain" description="Helicase ATP-binding" evidence="1">
    <location>
        <begin position="57"/>
        <end position="233"/>
    </location>
</feature>
<feature type="domain" description="Helicase C-terminal" evidence="2">
    <location>
        <begin position="374"/>
        <end position="551"/>
    </location>
</feature>
<feature type="short sequence motif" description="DEAH box">
    <location>
        <begin position="179"/>
        <end position="182"/>
    </location>
</feature>
<feature type="binding site" evidence="1">
    <location>
        <begin position="70"/>
        <end position="77"/>
    </location>
    <ligand>
        <name>ATP</name>
        <dbReference type="ChEBI" id="CHEBI:30616"/>
    </ligand>
</feature>
<dbReference type="EC" id="3.6.4.13"/>
<dbReference type="EMBL" id="AY653733">
    <property type="protein sequence ID" value="AAQ09587.2"/>
    <property type="molecule type" value="Genomic_DNA"/>
</dbReference>
<dbReference type="SMR" id="Q7T6X3"/>
<dbReference type="KEGG" id="vg:9925199"/>
<dbReference type="OrthoDB" id="1247at10239"/>
<dbReference type="Proteomes" id="UP000001134">
    <property type="component" value="Genome"/>
</dbReference>
<dbReference type="GO" id="GO:0044423">
    <property type="term" value="C:virion component"/>
    <property type="evidence" value="ECO:0007669"/>
    <property type="project" value="UniProtKB-KW"/>
</dbReference>
<dbReference type="GO" id="GO:0005524">
    <property type="term" value="F:ATP binding"/>
    <property type="evidence" value="ECO:0007669"/>
    <property type="project" value="UniProtKB-KW"/>
</dbReference>
<dbReference type="GO" id="GO:0016887">
    <property type="term" value="F:ATP hydrolysis activity"/>
    <property type="evidence" value="ECO:0007669"/>
    <property type="project" value="RHEA"/>
</dbReference>
<dbReference type="GO" id="GO:0003677">
    <property type="term" value="F:DNA binding"/>
    <property type="evidence" value="ECO:0007669"/>
    <property type="project" value="InterPro"/>
</dbReference>
<dbReference type="GO" id="GO:0004520">
    <property type="term" value="F:DNA endonuclease activity"/>
    <property type="evidence" value="ECO:0007669"/>
    <property type="project" value="TreeGrafter"/>
</dbReference>
<dbReference type="GO" id="GO:0003724">
    <property type="term" value="F:RNA helicase activity"/>
    <property type="evidence" value="ECO:0007669"/>
    <property type="project" value="UniProtKB-EC"/>
</dbReference>
<dbReference type="GO" id="GO:0006281">
    <property type="term" value="P:DNA repair"/>
    <property type="evidence" value="ECO:0007669"/>
    <property type="project" value="TreeGrafter"/>
</dbReference>
<dbReference type="GO" id="GO:0031297">
    <property type="term" value="P:replication fork processing"/>
    <property type="evidence" value="ECO:0007669"/>
    <property type="project" value="TreeGrafter"/>
</dbReference>
<dbReference type="Gene3D" id="3.40.50.300">
    <property type="entry name" value="P-loop containing nucleotide triphosphate hydrolases"/>
    <property type="match status" value="2"/>
</dbReference>
<dbReference type="InterPro" id="IPR006935">
    <property type="entry name" value="Helicase/UvrB_N"/>
</dbReference>
<dbReference type="InterPro" id="IPR014001">
    <property type="entry name" value="Helicase_ATP-bd"/>
</dbReference>
<dbReference type="InterPro" id="IPR001650">
    <property type="entry name" value="Helicase_C-like"/>
</dbReference>
<dbReference type="InterPro" id="IPR027417">
    <property type="entry name" value="P-loop_NTPase"/>
</dbReference>
<dbReference type="PANTHER" id="PTHR45766:SF3">
    <property type="entry name" value="DNA ANNEALING HELICASE AND ENDONUCLEASE ZRANB3"/>
    <property type="match status" value="1"/>
</dbReference>
<dbReference type="PANTHER" id="PTHR45766">
    <property type="entry name" value="DNA ANNEALING HELICASE AND ENDONUCLEASE ZRANB3 FAMILY MEMBER"/>
    <property type="match status" value="1"/>
</dbReference>
<dbReference type="Pfam" id="PF00271">
    <property type="entry name" value="Helicase_C"/>
    <property type="match status" value="1"/>
</dbReference>
<dbReference type="Pfam" id="PF04851">
    <property type="entry name" value="ResIII"/>
    <property type="match status" value="1"/>
</dbReference>
<dbReference type="SMART" id="SM00487">
    <property type="entry name" value="DEXDc"/>
    <property type="match status" value="1"/>
</dbReference>
<dbReference type="SUPFAM" id="SSF52540">
    <property type="entry name" value="P-loop containing nucleoside triphosphate hydrolases"/>
    <property type="match status" value="1"/>
</dbReference>
<dbReference type="PROSITE" id="PS51192">
    <property type="entry name" value="HELICASE_ATP_BIND_1"/>
    <property type="match status" value="1"/>
</dbReference>
<dbReference type="PROSITE" id="PS51194">
    <property type="entry name" value="HELICASE_CTER"/>
    <property type="match status" value="1"/>
</dbReference>
<sequence length="573" mass="66973">MSSRLSYVNVDDPNFYEFIDEKYSKYKIPPKQKTFKQFCFPSKYEFQIPQQFLAEYINPKTPYKGLLIYHRIGAGKTCTAIKIAENFKNKSKIMIVVPASLKGNFRSELRSLCADDHYLTSKERSELKILHPSSDEYKSIIKVSDDRIDKYYTIYSYNKFVDLIKQNKINLTNTLLIIDEVHNMISETGTYYESLYETIHSAPDNMRLVIMTATPIFDKPNEIALTMNLLVRNKQLPVGPDFVSTFMDIRYNSKGPVYHVKNMDLFKEFVKGYVSYYRGAPPYVFPKSELFFVRTKMSDLQKTVYQKITGKEVKQTKVRDYVNENISNNFFIGTRMISNIVYPNEKVGLKGYNSLTDEDLTIAKIREYSPKFLKILRKIKRCNGTVFVYSNFKEYGGIRVFARLLEFHRFKNYEFNGSGPRRFAIWSGDQDPIYKEEVKAVFNNKDNEFGSKIKVILGSSSIKEGVSFLRVQEVHIMEPYWNFSRMEQIIGRAIRFCSHKDVELDRQLVKVYIYLAVHPDIKMSIDERMMKMALDKKMINSAFEKALKEAAIDCELFKNANVYPGEQDIQCEQ</sequence>
<proteinExistence type="evidence at protein level"/>